<dbReference type="EMBL" id="CP001048">
    <property type="protein sequence ID" value="ACC88530.1"/>
    <property type="molecule type" value="Genomic_DNA"/>
</dbReference>
<dbReference type="RefSeq" id="WP_002226586.1">
    <property type="nucleotide sequence ID" value="NZ_CP009780.1"/>
</dbReference>
<dbReference type="SMR" id="B2JYT3"/>
<dbReference type="GeneID" id="57977130"/>
<dbReference type="KEGG" id="ypb:YPTS_1558"/>
<dbReference type="PATRIC" id="fig|502801.10.peg.922"/>
<dbReference type="GO" id="GO:0005737">
    <property type="term" value="C:cytoplasm"/>
    <property type="evidence" value="ECO:0007669"/>
    <property type="project" value="UniProtKB-SubCell"/>
</dbReference>
<dbReference type="GO" id="GO:0043565">
    <property type="term" value="F:sequence-specific DNA binding"/>
    <property type="evidence" value="ECO:0007669"/>
    <property type="project" value="UniProtKB-UniRule"/>
</dbReference>
<dbReference type="GO" id="GO:0051301">
    <property type="term" value="P:cell division"/>
    <property type="evidence" value="ECO:0007669"/>
    <property type="project" value="UniProtKB-UniRule"/>
</dbReference>
<dbReference type="GO" id="GO:0006355">
    <property type="term" value="P:regulation of DNA-templated transcription"/>
    <property type="evidence" value="ECO:0007669"/>
    <property type="project" value="InterPro"/>
</dbReference>
<dbReference type="Gene3D" id="1.20.1270.380">
    <property type="entry name" value="MatP, N-terminal domain"/>
    <property type="match status" value="1"/>
</dbReference>
<dbReference type="Gene3D" id="1.10.1220.10">
    <property type="entry name" value="Met repressor-like"/>
    <property type="match status" value="1"/>
</dbReference>
<dbReference type="HAMAP" id="MF_01073">
    <property type="entry name" value="MatP"/>
    <property type="match status" value="1"/>
</dbReference>
<dbReference type="InterPro" id="IPR013321">
    <property type="entry name" value="Arc_rbn_hlx_hlx"/>
</dbReference>
<dbReference type="InterPro" id="IPR009390">
    <property type="entry name" value="MatP"/>
</dbReference>
<dbReference type="InterPro" id="IPR035375">
    <property type="entry name" value="MatP_C"/>
</dbReference>
<dbReference type="InterPro" id="IPR035087">
    <property type="entry name" value="MatP_N"/>
</dbReference>
<dbReference type="InterPro" id="IPR038339">
    <property type="entry name" value="MatP_N_sf"/>
</dbReference>
<dbReference type="NCBIfam" id="NF003471">
    <property type="entry name" value="PRK05097.1"/>
    <property type="match status" value="1"/>
</dbReference>
<dbReference type="Pfam" id="PF06303">
    <property type="entry name" value="MatP"/>
    <property type="match status" value="1"/>
</dbReference>
<dbReference type="Pfam" id="PF17414">
    <property type="entry name" value="MatP_C"/>
    <property type="match status" value="1"/>
</dbReference>
<proteinExistence type="inferred from homology"/>
<feature type="chain" id="PRO_1000136682" description="Macrodomain Ter protein">
    <location>
        <begin position="1"/>
        <end position="151"/>
    </location>
</feature>
<accession>B2JYT3</accession>
<sequence>MKYQQLENLESGWKWAYLVKKHREGEAITRHIENSAAQDAVEQLMKLENEPVKVQEWIDAHMNVNLATRMKQTIRARRKRHFNAEHQHTRKKSIDLEFLVWQRLAVLARRRGNTLSDTVVQLIEDAERKEKYASQMSSLKQDLKDILDKEV</sequence>
<keyword id="KW-0131">Cell cycle</keyword>
<keyword id="KW-0132">Cell division</keyword>
<keyword id="KW-0963">Cytoplasm</keyword>
<keyword id="KW-0238">DNA-binding</keyword>
<name>MATP_YERPB</name>
<organism>
    <name type="scientific">Yersinia pseudotuberculosis serotype IB (strain PB1/+)</name>
    <dbReference type="NCBI Taxonomy" id="502801"/>
    <lineage>
        <taxon>Bacteria</taxon>
        <taxon>Pseudomonadati</taxon>
        <taxon>Pseudomonadota</taxon>
        <taxon>Gammaproteobacteria</taxon>
        <taxon>Enterobacterales</taxon>
        <taxon>Yersiniaceae</taxon>
        <taxon>Yersinia</taxon>
    </lineage>
</organism>
<protein>
    <recommendedName>
        <fullName evidence="1">Macrodomain Ter protein</fullName>
    </recommendedName>
</protein>
<gene>
    <name evidence="1" type="primary">matP</name>
    <name type="ordered locus">YPTS_1558</name>
</gene>
<comment type="function">
    <text evidence="1">Required for spatial organization of the terminus region of the chromosome (Ter macrodomain) during the cell cycle. Prevents early segregation of duplicated Ter macrodomains during cell division. Binds specifically to matS, which is a 13 bp signature motif repeated within the Ter macrodomain.</text>
</comment>
<comment type="subunit">
    <text evidence="1">Homodimer.</text>
</comment>
<comment type="subcellular location">
    <subcellularLocation>
        <location evidence="1">Cytoplasm</location>
    </subcellularLocation>
</comment>
<comment type="similarity">
    <text evidence="1">Belongs to the MatP family.</text>
</comment>
<reference key="1">
    <citation type="submission" date="2008-04" db="EMBL/GenBank/DDBJ databases">
        <title>Complete sequence of Yersinia pseudotuberculosis PB1/+.</title>
        <authorList>
            <person name="Copeland A."/>
            <person name="Lucas S."/>
            <person name="Lapidus A."/>
            <person name="Glavina del Rio T."/>
            <person name="Dalin E."/>
            <person name="Tice H."/>
            <person name="Bruce D."/>
            <person name="Goodwin L."/>
            <person name="Pitluck S."/>
            <person name="Munk A.C."/>
            <person name="Brettin T."/>
            <person name="Detter J.C."/>
            <person name="Han C."/>
            <person name="Tapia R."/>
            <person name="Schmutz J."/>
            <person name="Larimer F."/>
            <person name="Land M."/>
            <person name="Hauser L."/>
            <person name="Challacombe J.F."/>
            <person name="Green L."/>
            <person name="Lindler L.E."/>
            <person name="Nikolich M.P."/>
            <person name="Richardson P."/>
        </authorList>
    </citation>
    <scope>NUCLEOTIDE SEQUENCE [LARGE SCALE GENOMIC DNA]</scope>
    <source>
        <strain>PB1/+</strain>
    </source>
</reference>
<evidence type="ECO:0000255" key="1">
    <source>
        <dbReference type="HAMAP-Rule" id="MF_01073"/>
    </source>
</evidence>